<keyword id="KW-0539">Nucleus</keyword>
<keyword id="KW-1185">Reference proteome</keyword>
<keyword id="KW-0833">Ubl conjugation pathway</keyword>
<gene>
    <name type="primary">ASK4</name>
    <name type="ordered locus">At1g20140</name>
    <name type="ORF">T20H2.8</name>
</gene>
<proteinExistence type="evidence at protein level"/>
<accession>Q9LNT9</accession>
<sequence length="163" mass="18187">MAETKKMIILKSSDGESFEIEEAVAVKSQTIKHMIEDDCADNGIPLPNVTGAILAKVIEYCKKHVEAAAEAGGDKDFYGSAENDELKNWDSEFVKVDQPTLFDLILAANYLNIGGLLDLTCKAVADQMRGKTPEQMRAHFNIKNDYTPEEEAEVRNENKWAFE</sequence>
<feature type="chain" id="PRO_0000375245" description="SKP1-like protein 4">
    <location>
        <begin position="1"/>
        <end position="163"/>
    </location>
</feature>
<feature type="region of interest" description="Interaction with the F-box domain of F-box proteins" evidence="1">
    <location>
        <begin position="105"/>
        <end position="163"/>
    </location>
</feature>
<protein>
    <recommendedName>
        <fullName>SKP1-like protein 4</fullName>
        <shortName>AtSK4</shortName>
    </recommendedName>
</protein>
<name>ASK4_ARATH</name>
<reference key="1">
    <citation type="journal article" date="2000" name="Nature">
        <title>Sequence and analysis of chromosome 1 of the plant Arabidopsis thaliana.</title>
        <authorList>
            <person name="Theologis A."/>
            <person name="Ecker J.R."/>
            <person name="Palm C.J."/>
            <person name="Federspiel N.A."/>
            <person name="Kaul S."/>
            <person name="White O."/>
            <person name="Alonso J."/>
            <person name="Altafi H."/>
            <person name="Araujo R."/>
            <person name="Bowman C.L."/>
            <person name="Brooks S.Y."/>
            <person name="Buehler E."/>
            <person name="Chan A."/>
            <person name="Chao Q."/>
            <person name="Chen H."/>
            <person name="Cheuk R.F."/>
            <person name="Chin C.W."/>
            <person name="Chung M.K."/>
            <person name="Conn L."/>
            <person name="Conway A.B."/>
            <person name="Conway A.R."/>
            <person name="Creasy T.H."/>
            <person name="Dewar K."/>
            <person name="Dunn P."/>
            <person name="Etgu P."/>
            <person name="Feldblyum T.V."/>
            <person name="Feng J.-D."/>
            <person name="Fong B."/>
            <person name="Fujii C.Y."/>
            <person name="Gill J.E."/>
            <person name="Goldsmith A.D."/>
            <person name="Haas B."/>
            <person name="Hansen N.F."/>
            <person name="Hughes B."/>
            <person name="Huizar L."/>
            <person name="Hunter J.L."/>
            <person name="Jenkins J."/>
            <person name="Johnson-Hopson C."/>
            <person name="Khan S."/>
            <person name="Khaykin E."/>
            <person name="Kim C.J."/>
            <person name="Koo H.L."/>
            <person name="Kremenetskaia I."/>
            <person name="Kurtz D.B."/>
            <person name="Kwan A."/>
            <person name="Lam B."/>
            <person name="Langin-Hooper S."/>
            <person name="Lee A."/>
            <person name="Lee J.M."/>
            <person name="Lenz C.A."/>
            <person name="Li J.H."/>
            <person name="Li Y.-P."/>
            <person name="Lin X."/>
            <person name="Liu S.X."/>
            <person name="Liu Z.A."/>
            <person name="Luros J.S."/>
            <person name="Maiti R."/>
            <person name="Marziali A."/>
            <person name="Militscher J."/>
            <person name="Miranda M."/>
            <person name="Nguyen M."/>
            <person name="Nierman W.C."/>
            <person name="Osborne B.I."/>
            <person name="Pai G."/>
            <person name="Peterson J."/>
            <person name="Pham P.K."/>
            <person name="Rizzo M."/>
            <person name="Rooney T."/>
            <person name="Rowley D."/>
            <person name="Sakano H."/>
            <person name="Salzberg S.L."/>
            <person name="Schwartz J.R."/>
            <person name="Shinn P."/>
            <person name="Southwick A.M."/>
            <person name="Sun H."/>
            <person name="Tallon L.J."/>
            <person name="Tambunga G."/>
            <person name="Toriumi M.J."/>
            <person name="Town C.D."/>
            <person name="Utterback T."/>
            <person name="Van Aken S."/>
            <person name="Vaysberg M."/>
            <person name="Vysotskaia V.S."/>
            <person name="Walker M."/>
            <person name="Wu D."/>
            <person name="Yu G."/>
            <person name="Fraser C.M."/>
            <person name="Venter J.C."/>
            <person name="Davis R.W."/>
        </authorList>
    </citation>
    <scope>NUCLEOTIDE SEQUENCE [LARGE SCALE GENOMIC DNA]</scope>
    <source>
        <strain>cv. Columbia</strain>
    </source>
</reference>
<reference key="2">
    <citation type="journal article" date="2017" name="Plant J.">
        <title>Araport11: a complete reannotation of the Arabidopsis thaliana reference genome.</title>
        <authorList>
            <person name="Cheng C.Y."/>
            <person name="Krishnakumar V."/>
            <person name="Chan A.P."/>
            <person name="Thibaud-Nissen F."/>
            <person name="Schobel S."/>
            <person name="Town C.D."/>
        </authorList>
    </citation>
    <scope>GENOME REANNOTATION</scope>
    <source>
        <strain>cv. Columbia</strain>
    </source>
</reference>
<reference key="3">
    <citation type="journal article" date="2003" name="Science">
        <title>Empirical analysis of transcriptional activity in the Arabidopsis genome.</title>
        <authorList>
            <person name="Yamada K."/>
            <person name="Lim J."/>
            <person name="Dale J.M."/>
            <person name="Chen H."/>
            <person name="Shinn P."/>
            <person name="Palm C.J."/>
            <person name="Southwick A.M."/>
            <person name="Wu H.C."/>
            <person name="Kim C.J."/>
            <person name="Nguyen M."/>
            <person name="Pham P.K."/>
            <person name="Cheuk R.F."/>
            <person name="Karlin-Newmann G."/>
            <person name="Liu S.X."/>
            <person name="Lam B."/>
            <person name="Sakano H."/>
            <person name="Wu T."/>
            <person name="Yu G."/>
            <person name="Miranda M."/>
            <person name="Quach H.L."/>
            <person name="Tripp M."/>
            <person name="Chang C.H."/>
            <person name="Lee J.M."/>
            <person name="Toriumi M.J."/>
            <person name="Chan M.M."/>
            <person name="Tang C.C."/>
            <person name="Onodera C.S."/>
            <person name="Deng J.M."/>
            <person name="Akiyama K."/>
            <person name="Ansari Y."/>
            <person name="Arakawa T."/>
            <person name="Banh J."/>
            <person name="Banno F."/>
            <person name="Bowser L."/>
            <person name="Brooks S.Y."/>
            <person name="Carninci P."/>
            <person name="Chao Q."/>
            <person name="Choy N."/>
            <person name="Enju A."/>
            <person name="Goldsmith A.D."/>
            <person name="Gurjal M."/>
            <person name="Hansen N.F."/>
            <person name="Hayashizaki Y."/>
            <person name="Johnson-Hopson C."/>
            <person name="Hsuan V.W."/>
            <person name="Iida K."/>
            <person name="Karnes M."/>
            <person name="Khan S."/>
            <person name="Koesema E."/>
            <person name="Ishida J."/>
            <person name="Jiang P.X."/>
            <person name="Jones T."/>
            <person name="Kawai J."/>
            <person name="Kamiya A."/>
            <person name="Meyers C."/>
            <person name="Nakajima M."/>
            <person name="Narusaka M."/>
            <person name="Seki M."/>
            <person name="Sakurai T."/>
            <person name="Satou M."/>
            <person name="Tamse R."/>
            <person name="Vaysberg M."/>
            <person name="Wallender E.K."/>
            <person name="Wong C."/>
            <person name="Yamamura Y."/>
            <person name="Yuan S."/>
            <person name="Shinozaki K."/>
            <person name="Davis R.W."/>
            <person name="Theologis A."/>
            <person name="Ecker J.R."/>
        </authorList>
    </citation>
    <scope>NUCLEOTIDE SEQUENCE [LARGE SCALE MRNA]</scope>
    <source>
        <strain>cv. Columbia</strain>
    </source>
</reference>
<reference key="4">
    <citation type="journal article" date="2002" name="Proc. Natl. Acad. Sci. U.S.A.">
        <title>The F-box subunit of the SCF E3 complex is encoded by a diverse superfamily of genes in Arabidopsis.</title>
        <authorList>
            <person name="Gagne J.M."/>
            <person name="Downes B.P."/>
            <person name="Shiu S.-H."/>
            <person name="Durski A.M."/>
            <person name="Vierstra R.D."/>
        </authorList>
    </citation>
    <scope>INTERACTION WITH AT1G56610; AT1G67340; AT3G62230; AT3G59000; AT4G27050; AT1G55000; SKIP16 AND SKIP32</scope>
</reference>
<reference key="5">
    <citation type="journal article" date="2003" name="Plant Physiol.">
        <title>Members of the Arabidopsis-SKP1-like gene family exhibit a variety of expression patterns and may play diverse roles in Arabidopsis.</title>
        <authorList>
            <person name="Zhao D."/>
            <person name="Ni W."/>
            <person name="Feng B."/>
            <person name="Han T."/>
            <person name="Petrasek M.G."/>
            <person name="Ma H."/>
        </authorList>
    </citation>
    <scope>GENE FAMILY</scope>
    <scope>NOMENCLATURE</scope>
    <scope>TISSUE SPECIFICITY</scope>
    <scope>DEVELOPMENTAL STAGE</scope>
</reference>
<comment type="function">
    <text evidence="1">Involved in ubiquitination and subsequent proteasomal degradation of target proteins. Together with CUL1, RBX1 and a F-box protein, it forms a SCF E3 ubiquitin ligase complex. The functional specificity of this complex depends on the type of F-box protein. In the SCF complex, it serves as an adapter that links the F-box protein to CUL1 (By similarity).</text>
</comment>
<comment type="pathway">
    <text>Protein modification; protein ubiquitination.</text>
</comment>
<comment type="subunit">
    <text evidence="1 2">Part of a SCF (SKP1-cullin-F-box) protein ligase complex (By similarity). Interacts with At1g56610, At1g67340, At3g62230, At3g59000, At4g27050, At1g55000, SKIP16 and SKIP32.</text>
</comment>
<comment type="interaction">
    <interactant intactId="EBI-604085">
        <id>Q9LNT9</id>
    </interactant>
    <interactant intactId="EBI-687388">
        <id>Q8LEA8</id>
        <label>EID1</label>
    </interactant>
    <organismsDiffer>false</organismsDiffer>
    <experiments>4</experiments>
</comment>
<comment type="interaction">
    <interactant intactId="EBI-604085">
        <id>Q9LNT9</id>
    </interactant>
    <interactant intactId="EBI-604555">
        <id>Q84JU4</id>
        <label>IBR5</label>
    </interactant>
    <organismsDiffer>false</organismsDiffer>
    <experiments>3</experiments>
</comment>
<comment type="interaction">
    <interactant intactId="EBI-604085">
        <id>Q9LNT9</id>
    </interactant>
    <interactant intactId="EBI-25519488">
        <id>Q9SZU7</id>
        <label>KAI2</label>
    </interactant>
    <organismsDiffer>false</organismsDiffer>
    <experiments>3</experiments>
</comment>
<comment type="interaction">
    <interactant intactId="EBI-604085">
        <id>Q9LNT9</id>
    </interactant>
    <interactant intactId="EBI-25529872">
        <id>Q9SIM9</id>
        <label>MAX2</label>
    </interactant>
    <organismsDiffer>false</organismsDiffer>
    <experiments>3</experiments>
</comment>
<comment type="subcellular location">
    <subcellularLocation>
        <location evidence="1">Nucleus</location>
    </subcellularLocation>
</comment>
<comment type="tissue specificity">
    <text evidence="3">Mostly expressed in inflorescence and siliques, and, to a lower extent, in seedlings, roots, and stems.</text>
</comment>
<comment type="developmental stage">
    <text evidence="3">Detected throughout the inflorescence at a higher level in the inflorescence meristem (IM) than in the young flower. Very strongly expressed in the valve, septum, and developing seed. Also present in pollen grains.</text>
</comment>
<comment type="similarity">
    <text evidence="4">Belongs to the SKP1 family.</text>
</comment>
<evidence type="ECO:0000250" key="1"/>
<evidence type="ECO:0000269" key="2">
    <source>
    </source>
</evidence>
<evidence type="ECO:0000269" key="3">
    <source>
    </source>
</evidence>
<evidence type="ECO:0000305" key="4"/>
<dbReference type="EMBL" id="AC022472">
    <property type="protein sequence ID" value="AAF79899.1"/>
    <property type="molecule type" value="Genomic_DNA"/>
</dbReference>
<dbReference type="EMBL" id="CP002684">
    <property type="protein sequence ID" value="AEE29943.1"/>
    <property type="molecule type" value="Genomic_DNA"/>
</dbReference>
<dbReference type="EMBL" id="AY058205">
    <property type="protein sequence ID" value="AAL25617.1"/>
    <property type="molecule type" value="mRNA"/>
</dbReference>
<dbReference type="EMBL" id="AY098980">
    <property type="protein sequence ID" value="AAM19990.1"/>
    <property type="molecule type" value="mRNA"/>
</dbReference>
<dbReference type="PIR" id="B86335">
    <property type="entry name" value="B86335"/>
</dbReference>
<dbReference type="RefSeq" id="NP_564105.1">
    <property type="nucleotide sequence ID" value="NM_101868.5"/>
</dbReference>
<dbReference type="SMR" id="Q9LNT9"/>
<dbReference type="BioGRID" id="23843">
    <property type="interactions" value="68"/>
</dbReference>
<dbReference type="ComplexPortal" id="CPX-1431">
    <property type="entry name" value="SCF(COI1) ubiquitin ligase complex, variant CUL1-RBX1A-ASK4"/>
</dbReference>
<dbReference type="ComplexPortal" id="CPX-1452">
    <property type="entry name" value="SCF(COI1) ubiquitin ligase complex, variant CUL1-RBX1B-ASK4"/>
</dbReference>
<dbReference type="ComplexPortal" id="CPX-1474">
    <property type="entry name" value="SCF(COI1) ubiquitin ligase complex, variant CUL2-RBX1A-ASK4"/>
</dbReference>
<dbReference type="ComplexPortal" id="CPX-1495">
    <property type="entry name" value="SCF(COI1) ubiquitin ligase complex, variant CUL2-RBX1B-ASK4"/>
</dbReference>
<dbReference type="ComplexPortal" id="CPX-1517">
    <property type="entry name" value="SCF(TIR1) ubiquitin ligase complex, variant CUL1-RBX1A-ASK4"/>
</dbReference>
<dbReference type="ComplexPortal" id="CPX-1538">
    <property type="entry name" value="SCF(TIR1) ubiquitin ligase complex, variant CUL1-RBX1B-ASK4"/>
</dbReference>
<dbReference type="ComplexPortal" id="CPX-1560">
    <property type="entry name" value="SCF(TIR1) ubiquitin ligase complex, variant CUL2-RBX1A-ASK4"/>
</dbReference>
<dbReference type="ComplexPortal" id="CPX-1581">
    <property type="entry name" value="SCF(TIR1) ubiquitin ligase complex, variant CUL2-RBX1B-ASK4"/>
</dbReference>
<dbReference type="DIP" id="DIP-34007N"/>
<dbReference type="FunCoup" id="Q9LNT9">
    <property type="interactions" value="2646"/>
</dbReference>
<dbReference type="IntAct" id="Q9LNT9">
    <property type="interactions" value="32"/>
</dbReference>
<dbReference type="STRING" id="3702.Q9LNT9"/>
<dbReference type="PaxDb" id="3702-AT1G20140.1"/>
<dbReference type="ProteomicsDB" id="246795"/>
<dbReference type="EnsemblPlants" id="AT1G20140.1">
    <property type="protein sequence ID" value="AT1G20140.1"/>
    <property type="gene ID" value="AT1G20140"/>
</dbReference>
<dbReference type="GeneID" id="838604"/>
<dbReference type="Gramene" id="AT1G20140.1">
    <property type="protein sequence ID" value="AT1G20140.1"/>
    <property type="gene ID" value="AT1G20140"/>
</dbReference>
<dbReference type="KEGG" id="ath:AT1G20140"/>
<dbReference type="Araport" id="AT1G20140"/>
<dbReference type="TAIR" id="AT1G20140">
    <property type="gene designation" value="SK4"/>
</dbReference>
<dbReference type="eggNOG" id="KOG1724">
    <property type="taxonomic scope" value="Eukaryota"/>
</dbReference>
<dbReference type="HOGENOM" id="CLU_059252_6_1_1"/>
<dbReference type="InParanoid" id="Q9LNT9"/>
<dbReference type="OMA" id="NEWNEME"/>
<dbReference type="OrthoDB" id="7827685at2759"/>
<dbReference type="PhylomeDB" id="Q9LNT9"/>
<dbReference type="UniPathway" id="UPA00143"/>
<dbReference type="PRO" id="PR:Q9LNT9"/>
<dbReference type="Proteomes" id="UP000006548">
    <property type="component" value="Chromosome 1"/>
</dbReference>
<dbReference type="ExpressionAtlas" id="Q9LNT9">
    <property type="expression patterns" value="baseline and differential"/>
</dbReference>
<dbReference type="GO" id="GO:0005737">
    <property type="term" value="C:cytoplasm"/>
    <property type="evidence" value="ECO:0007005"/>
    <property type="project" value="TAIR"/>
</dbReference>
<dbReference type="GO" id="GO:0005730">
    <property type="term" value="C:nucleolus"/>
    <property type="evidence" value="ECO:0007005"/>
    <property type="project" value="TAIR"/>
</dbReference>
<dbReference type="GO" id="GO:0005634">
    <property type="term" value="C:nucleus"/>
    <property type="evidence" value="ECO:0007005"/>
    <property type="project" value="TAIR"/>
</dbReference>
<dbReference type="GO" id="GO:0019005">
    <property type="term" value="C:SCF ubiquitin ligase complex"/>
    <property type="evidence" value="ECO:0000250"/>
    <property type="project" value="TAIR"/>
</dbReference>
<dbReference type="GO" id="GO:0009734">
    <property type="term" value="P:auxin-activated signaling pathway"/>
    <property type="evidence" value="ECO:0000303"/>
    <property type="project" value="ComplexPortal"/>
</dbReference>
<dbReference type="GO" id="GO:0009867">
    <property type="term" value="P:jasmonic acid mediated signaling pathway"/>
    <property type="evidence" value="ECO:0000315"/>
    <property type="project" value="ComplexPortal"/>
</dbReference>
<dbReference type="GO" id="GO:0016567">
    <property type="term" value="P:protein ubiquitination"/>
    <property type="evidence" value="ECO:0007669"/>
    <property type="project" value="UniProtKB-UniPathway"/>
</dbReference>
<dbReference type="GO" id="GO:0009733">
    <property type="term" value="P:response to auxin"/>
    <property type="evidence" value="ECO:0000303"/>
    <property type="project" value="ComplexPortal"/>
</dbReference>
<dbReference type="GO" id="GO:0009753">
    <property type="term" value="P:response to jasmonic acid"/>
    <property type="evidence" value="ECO:0000315"/>
    <property type="project" value="ComplexPortal"/>
</dbReference>
<dbReference type="GO" id="GO:0006511">
    <property type="term" value="P:ubiquitin-dependent protein catabolic process"/>
    <property type="evidence" value="ECO:0000304"/>
    <property type="project" value="TAIR"/>
</dbReference>
<dbReference type="CDD" id="cd18322">
    <property type="entry name" value="BTB_POZ_SKP1"/>
    <property type="match status" value="1"/>
</dbReference>
<dbReference type="FunFam" id="3.30.710.10:FF:000057">
    <property type="entry name" value="SKP1-like protein 1A"/>
    <property type="match status" value="1"/>
</dbReference>
<dbReference type="Gene3D" id="3.30.710.10">
    <property type="entry name" value="Potassium Channel Kv1.1, Chain A"/>
    <property type="match status" value="1"/>
</dbReference>
<dbReference type="InterPro" id="IPR016897">
    <property type="entry name" value="SKP1"/>
</dbReference>
<dbReference type="InterPro" id="IPR001232">
    <property type="entry name" value="SKP1-like"/>
</dbReference>
<dbReference type="InterPro" id="IPR036296">
    <property type="entry name" value="SKP1-like_dim_sf"/>
</dbReference>
<dbReference type="InterPro" id="IPR011333">
    <property type="entry name" value="SKP1/BTB/POZ_sf"/>
</dbReference>
<dbReference type="InterPro" id="IPR016072">
    <property type="entry name" value="Skp1_comp_dimer"/>
</dbReference>
<dbReference type="InterPro" id="IPR016073">
    <property type="entry name" value="Skp1_comp_POZ"/>
</dbReference>
<dbReference type="PANTHER" id="PTHR11165">
    <property type="entry name" value="SKP1"/>
    <property type="match status" value="1"/>
</dbReference>
<dbReference type="Pfam" id="PF01466">
    <property type="entry name" value="Skp1"/>
    <property type="match status" value="1"/>
</dbReference>
<dbReference type="Pfam" id="PF03931">
    <property type="entry name" value="Skp1_POZ"/>
    <property type="match status" value="1"/>
</dbReference>
<dbReference type="PIRSF" id="PIRSF028729">
    <property type="entry name" value="E3_ubiquit_lig_SCF_Skp"/>
    <property type="match status" value="1"/>
</dbReference>
<dbReference type="SMART" id="SM00512">
    <property type="entry name" value="Skp1"/>
    <property type="match status" value="1"/>
</dbReference>
<dbReference type="SUPFAM" id="SSF54695">
    <property type="entry name" value="POZ domain"/>
    <property type="match status" value="1"/>
</dbReference>
<dbReference type="SUPFAM" id="SSF81382">
    <property type="entry name" value="Skp1 dimerisation domain-like"/>
    <property type="match status" value="1"/>
</dbReference>
<organism>
    <name type="scientific">Arabidopsis thaliana</name>
    <name type="common">Mouse-ear cress</name>
    <dbReference type="NCBI Taxonomy" id="3702"/>
    <lineage>
        <taxon>Eukaryota</taxon>
        <taxon>Viridiplantae</taxon>
        <taxon>Streptophyta</taxon>
        <taxon>Embryophyta</taxon>
        <taxon>Tracheophyta</taxon>
        <taxon>Spermatophyta</taxon>
        <taxon>Magnoliopsida</taxon>
        <taxon>eudicotyledons</taxon>
        <taxon>Gunneridae</taxon>
        <taxon>Pentapetalae</taxon>
        <taxon>rosids</taxon>
        <taxon>malvids</taxon>
        <taxon>Brassicales</taxon>
        <taxon>Brassicaceae</taxon>
        <taxon>Camelineae</taxon>
        <taxon>Arabidopsis</taxon>
    </lineage>
</organism>